<evidence type="ECO:0000255" key="1">
    <source>
        <dbReference type="HAMAP-Rule" id="MF_00294"/>
    </source>
</evidence>
<evidence type="ECO:0000305" key="2"/>
<gene>
    <name evidence="1" type="primary">rpmG</name>
    <name type="ordered locus">VP0186</name>
</gene>
<sequence length="56" mass="6524">MAKKGVREKIRLVSSAGTGHFYTTDKNKRNMPGKFEIKKFDPVVRQHVMYKEAKIK</sequence>
<feature type="chain" id="PRO_0000170262" description="Large ribosomal subunit protein bL33">
    <location>
        <begin position="1"/>
        <end position="56"/>
    </location>
</feature>
<protein>
    <recommendedName>
        <fullName evidence="1">Large ribosomal subunit protein bL33</fullName>
    </recommendedName>
    <alternativeName>
        <fullName evidence="2">50S ribosomal protein L33</fullName>
    </alternativeName>
</protein>
<accession>Q87T84</accession>
<keyword id="KW-0687">Ribonucleoprotein</keyword>
<keyword id="KW-0689">Ribosomal protein</keyword>
<dbReference type="EMBL" id="BA000031">
    <property type="protein sequence ID" value="BAC58449.1"/>
    <property type="molecule type" value="Genomic_DNA"/>
</dbReference>
<dbReference type="RefSeq" id="NP_796565.1">
    <property type="nucleotide sequence ID" value="NC_004603.1"/>
</dbReference>
<dbReference type="RefSeq" id="WP_004410866.1">
    <property type="nucleotide sequence ID" value="NC_004603.1"/>
</dbReference>
<dbReference type="SMR" id="Q87T84"/>
<dbReference type="GeneID" id="97171030"/>
<dbReference type="KEGG" id="vpa:VP0186"/>
<dbReference type="PATRIC" id="fig|223926.6.peg.178"/>
<dbReference type="eggNOG" id="COG0267">
    <property type="taxonomic scope" value="Bacteria"/>
</dbReference>
<dbReference type="HOGENOM" id="CLU_190949_1_1_6"/>
<dbReference type="PRO" id="PR:Q87T84"/>
<dbReference type="Proteomes" id="UP000002493">
    <property type="component" value="Chromosome 1"/>
</dbReference>
<dbReference type="GO" id="GO:0022625">
    <property type="term" value="C:cytosolic large ribosomal subunit"/>
    <property type="evidence" value="ECO:0007669"/>
    <property type="project" value="TreeGrafter"/>
</dbReference>
<dbReference type="GO" id="GO:0003735">
    <property type="term" value="F:structural constituent of ribosome"/>
    <property type="evidence" value="ECO:0007669"/>
    <property type="project" value="InterPro"/>
</dbReference>
<dbReference type="GO" id="GO:0006412">
    <property type="term" value="P:translation"/>
    <property type="evidence" value="ECO:0007669"/>
    <property type="project" value="UniProtKB-UniRule"/>
</dbReference>
<dbReference type="FunFam" id="2.20.28.120:FF:000001">
    <property type="entry name" value="50S ribosomal protein L33"/>
    <property type="match status" value="1"/>
</dbReference>
<dbReference type="Gene3D" id="2.20.28.120">
    <property type="entry name" value="Ribosomal protein L33"/>
    <property type="match status" value="1"/>
</dbReference>
<dbReference type="HAMAP" id="MF_00294">
    <property type="entry name" value="Ribosomal_bL33"/>
    <property type="match status" value="1"/>
</dbReference>
<dbReference type="InterPro" id="IPR001705">
    <property type="entry name" value="Ribosomal_bL33"/>
</dbReference>
<dbReference type="InterPro" id="IPR018264">
    <property type="entry name" value="Ribosomal_bL33_CS"/>
</dbReference>
<dbReference type="InterPro" id="IPR038584">
    <property type="entry name" value="Ribosomal_bL33_sf"/>
</dbReference>
<dbReference type="InterPro" id="IPR011332">
    <property type="entry name" value="Ribosomal_zn-bd"/>
</dbReference>
<dbReference type="NCBIfam" id="NF001860">
    <property type="entry name" value="PRK00595.1"/>
    <property type="match status" value="1"/>
</dbReference>
<dbReference type="NCBIfam" id="TIGR01023">
    <property type="entry name" value="rpmG_bact"/>
    <property type="match status" value="1"/>
</dbReference>
<dbReference type="PANTHER" id="PTHR15238">
    <property type="entry name" value="54S RIBOSOMAL PROTEIN L39, MITOCHONDRIAL"/>
    <property type="match status" value="1"/>
</dbReference>
<dbReference type="PANTHER" id="PTHR15238:SF1">
    <property type="entry name" value="LARGE RIBOSOMAL SUBUNIT PROTEIN BL33M"/>
    <property type="match status" value="1"/>
</dbReference>
<dbReference type="Pfam" id="PF00471">
    <property type="entry name" value="Ribosomal_L33"/>
    <property type="match status" value="1"/>
</dbReference>
<dbReference type="SUPFAM" id="SSF57829">
    <property type="entry name" value="Zn-binding ribosomal proteins"/>
    <property type="match status" value="1"/>
</dbReference>
<dbReference type="PROSITE" id="PS00582">
    <property type="entry name" value="RIBOSOMAL_L33"/>
    <property type="match status" value="1"/>
</dbReference>
<proteinExistence type="inferred from homology"/>
<comment type="similarity">
    <text evidence="1">Belongs to the bacterial ribosomal protein bL33 family.</text>
</comment>
<reference key="1">
    <citation type="journal article" date="2003" name="Lancet">
        <title>Genome sequence of Vibrio parahaemolyticus: a pathogenic mechanism distinct from that of V. cholerae.</title>
        <authorList>
            <person name="Makino K."/>
            <person name="Oshima K."/>
            <person name="Kurokawa K."/>
            <person name="Yokoyama K."/>
            <person name="Uda T."/>
            <person name="Tagomori K."/>
            <person name="Iijima Y."/>
            <person name="Najima M."/>
            <person name="Nakano M."/>
            <person name="Yamashita A."/>
            <person name="Kubota Y."/>
            <person name="Kimura S."/>
            <person name="Yasunaga T."/>
            <person name="Honda T."/>
            <person name="Shinagawa H."/>
            <person name="Hattori M."/>
            <person name="Iida T."/>
        </authorList>
    </citation>
    <scope>NUCLEOTIDE SEQUENCE [LARGE SCALE GENOMIC DNA]</scope>
    <source>
        <strain>RIMD 2210633</strain>
    </source>
</reference>
<organism>
    <name type="scientific">Vibrio parahaemolyticus serotype O3:K6 (strain RIMD 2210633)</name>
    <dbReference type="NCBI Taxonomy" id="223926"/>
    <lineage>
        <taxon>Bacteria</taxon>
        <taxon>Pseudomonadati</taxon>
        <taxon>Pseudomonadota</taxon>
        <taxon>Gammaproteobacteria</taxon>
        <taxon>Vibrionales</taxon>
        <taxon>Vibrionaceae</taxon>
        <taxon>Vibrio</taxon>
    </lineage>
</organism>
<name>RL33_VIBPA</name>